<proteinExistence type="inferred from homology"/>
<organism>
    <name type="scientific">Corynebacterium glutamicum (strain ATCC 13032 / DSM 20300 / JCM 1318 / BCRC 11384 / CCUG 27702 / LMG 3730 / NBRC 12168 / NCIMB 10025 / NRRL B-2784 / 534)</name>
    <dbReference type="NCBI Taxonomy" id="196627"/>
    <lineage>
        <taxon>Bacteria</taxon>
        <taxon>Bacillati</taxon>
        <taxon>Actinomycetota</taxon>
        <taxon>Actinomycetes</taxon>
        <taxon>Mycobacteriales</taxon>
        <taxon>Corynebacteriaceae</taxon>
        <taxon>Corynebacterium</taxon>
    </lineage>
</organism>
<dbReference type="EMBL" id="BA000036">
    <property type="protein sequence ID" value="BAC00478.1"/>
    <property type="molecule type" value="Genomic_DNA"/>
</dbReference>
<dbReference type="EMBL" id="BX927157">
    <property type="protein sequence ID" value="CAF19022.1"/>
    <property type="status" value="ALT_INIT"/>
    <property type="molecule type" value="Genomic_DNA"/>
</dbReference>
<dbReference type="RefSeq" id="NP_602275.1">
    <property type="nucleotide sequence ID" value="NC_003450.3"/>
</dbReference>
<dbReference type="SMR" id="Q8NL65"/>
<dbReference type="STRING" id="196627.cg3414"/>
<dbReference type="KEGG" id="cgb:cg3414"/>
<dbReference type="KEGG" id="cgl:Cgl3084"/>
<dbReference type="PATRIC" id="fig|196627.13.peg.3016"/>
<dbReference type="eggNOG" id="COG1678">
    <property type="taxonomic scope" value="Bacteria"/>
</dbReference>
<dbReference type="HOGENOM" id="CLU_057596_2_0_11"/>
<dbReference type="OrthoDB" id="9807486at2"/>
<dbReference type="BioCyc" id="CORYNE:G18NG-12705-MONOMER"/>
<dbReference type="Proteomes" id="UP000000582">
    <property type="component" value="Chromosome"/>
</dbReference>
<dbReference type="Proteomes" id="UP000001009">
    <property type="component" value="Chromosome"/>
</dbReference>
<dbReference type="GO" id="GO:0005829">
    <property type="term" value="C:cytosol"/>
    <property type="evidence" value="ECO:0007669"/>
    <property type="project" value="TreeGrafter"/>
</dbReference>
<dbReference type="Gene3D" id="3.40.1740.10">
    <property type="entry name" value="VC0467-like"/>
    <property type="match status" value="1"/>
</dbReference>
<dbReference type="HAMAP" id="MF_00758">
    <property type="entry name" value="UPF0301"/>
    <property type="match status" value="1"/>
</dbReference>
<dbReference type="InterPro" id="IPR003774">
    <property type="entry name" value="AlgH-like"/>
</dbReference>
<dbReference type="NCBIfam" id="NF001272">
    <property type="entry name" value="PRK00228.2-4"/>
    <property type="match status" value="1"/>
</dbReference>
<dbReference type="PANTHER" id="PTHR30327">
    <property type="entry name" value="UNCHARACTERIZED PROTEIN YQGE"/>
    <property type="match status" value="1"/>
</dbReference>
<dbReference type="PANTHER" id="PTHR30327:SF1">
    <property type="entry name" value="UPF0301 PROTEIN YQGE"/>
    <property type="match status" value="1"/>
</dbReference>
<dbReference type="Pfam" id="PF02622">
    <property type="entry name" value="DUF179"/>
    <property type="match status" value="1"/>
</dbReference>
<dbReference type="SUPFAM" id="SSF143456">
    <property type="entry name" value="VC0467-like"/>
    <property type="match status" value="1"/>
</dbReference>
<feature type="chain" id="PRO_0000214321" description="UPF0301 protein Cgl3084/cg3414">
    <location>
        <begin position="1"/>
        <end position="189"/>
    </location>
</feature>
<evidence type="ECO:0000255" key="1">
    <source>
        <dbReference type="HAMAP-Rule" id="MF_00758"/>
    </source>
</evidence>
<evidence type="ECO:0000305" key="2"/>
<comment type="similarity">
    <text evidence="1">Belongs to the UPF0301 (AlgH) family.</text>
</comment>
<comment type="sequence caution" evidence="2">
    <conflict type="erroneous initiation">
        <sequence resource="EMBL-CDS" id="CAF19022"/>
    </conflict>
</comment>
<gene>
    <name type="ordered locus">Cgl3084</name>
    <name type="ordered locus">cg3414</name>
</gene>
<reference key="1">
    <citation type="journal article" date="2003" name="Appl. Microbiol. Biotechnol.">
        <title>The Corynebacterium glutamicum genome: features and impacts on biotechnological processes.</title>
        <authorList>
            <person name="Ikeda M."/>
            <person name="Nakagawa S."/>
        </authorList>
    </citation>
    <scope>NUCLEOTIDE SEQUENCE [LARGE SCALE GENOMIC DNA]</scope>
    <source>
        <strain>ATCC 13032 / DSM 20300 / JCM 1318 / BCRC 11384 / CCUG 27702 / LMG 3730 / NBRC 12168 / NCIMB 10025 / NRRL B-2784 / 534</strain>
    </source>
</reference>
<reference key="2">
    <citation type="journal article" date="2003" name="J. Biotechnol.">
        <title>The complete Corynebacterium glutamicum ATCC 13032 genome sequence and its impact on the production of L-aspartate-derived amino acids and vitamins.</title>
        <authorList>
            <person name="Kalinowski J."/>
            <person name="Bathe B."/>
            <person name="Bartels D."/>
            <person name="Bischoff N."/>
            <person name="Bott M."/>
            <person name="Burkovski A."/>
            <person name="Dusch N."/>
            <person name="Eggeling L."/>
            <person name="Eikmanns B.J."/>
            <person name="Gaigalat L."/>
            <person name="Goesmann A."/>
            <person name="Hartmann M."/>
            <person name="Huthmacher K."/>
            <person name="Kraemer R."/>
            <person name="Linke B."/>
            <person name="McHardy A.C."/>
            <person name="Meyer F."/>
            <person name="Moeckel B."/>
            <person name="Pfefferle W."/>
            <person name="Puehler A."/>
            <person name="Rey D.A."/>
            <person name="Rueckert C."/>
            <person name="Rupp O."/>
            <person name="Sahm H."/>
            <person name="Wendisch V.F."/>
            <person name="Wiegraebe I."/>
            <person name="Tauch A."/>
        </authorList>
    </citation>
    <scope>NUCLEOTIDE SEQUENCE [LARGE SCALE GENOMIC DNA]</scope>
    <source>
        <strain>ATCC 13032 / DSM 20300 / JCM 1318 / BCRC 11384 / CCUG 27702 / LMG 3730 / NBRC 12168 / NCIMB 10025 / NRRL B-2784 / 534</strain>
    </source>
</reference>
<name>Y3084_CORGL</name>
<protein>
    <recommendedName>
        <fullName evidence="1">UPF0301 protein Cgl3084/cg3414</fullName>
    </recommendedName>
</protein>
<sequence length="189" mass="20536">MERNEVAPGMLLVAAPDMASEDFERSIVLIIEHSPATTFGVNISSRSDVAVANVLPEWVDLTSKPQALYIGGPLSQQAVVGLGVTKPGVDIENSTSFNKLANRLVHVDLRSAPEDVADDLEGMRFFAGYAEWAPGQLNEEIEQGDWFVTPALPSDIIAPGRVDIWGDVMRRQAMPLPLYSTFPSDPSDN</sequence>
<accession>Q8NL65</accession>
<keyword id="KW-1185">Reference proteome</keyword>